<keyword id="KW-1003">Cell membrane</keyword>
<keyword id="KW-0217">Developmental protein</keyword>
<keyword id="KW-1015">Disulfide bond</keyword>
<keyword id="KW-0297">G-protein coupled receptor</keyword>
<keyword id="KW-0325">Glycoprotein</keyword>
<keyword id="KW-0472">Membrane</keyword>
<keyword id="KW-0675">Receptor</keyword>
<keyword id="KW-1185">Reference proteome</keyword>
<keyword id="KW-0732">Signal</keyword>
<keyword id="KW-0807">Transducer</keyword>
<keyword id="KW-0812">Transmembrane</keyword>
<keyword id="KW-1133">Transmembrane helix</keyword>
<keyword id="KW-0879">Wnt signaling pathway</keyword>
<organism>
    <name type="scientific">Gallus gallus</name>
    <name type="common">Chicken</name>
    <dbReference type="NCBI Taxonomy" id="9031"/>
    <lineage>
        <taxon>Eukaryota</taxon>
        <taxon>Metazoa</taxon>
        <taxon>Chordata</taxon>
        <taxon>Craniata</taxon>
        <taxon>Vertebrata</taxon>
        <taxon>Euteleostomi</taxon>
        <taxon>Archelosauria</taxon>
        <taxon>Archosauria</taxon>
        <taxon>Dinosauria</taxon>
        <taxon>Saurischia</taxon>
        <taxon>Theropoda</taxon>
        <taxon>Coelurosauria</taxon>
        <taxon>Aves</taxon>
        <taxon>Neognathae</taxon>
        <taxon>Galloanserae</taxon>
        <taxon>Galliformes</taxon>
        <taxon>Phasianidae</taxon>
        <taxon>Phasianinae</taxon>
        <taxon>Gallus</taxon>
    </lineage>
</organism>
<dbReference type="EMBL" id="AF031830">
    <property type="protein sequence ID" value="AAB87968.1"/>
    <property type="molecule type" value="mRNA"/>
</dbReference>
<dbReference type="EMBL" id="AF224314">
    <property type="protein sequence ID" value="AAF61094.1"/>
    <property type="molecule type" value="mRNA"/>
</dbReference>
<dbReference type="RefSeq" id="NP_001025508.1">
    <property type="nucleotide sequence ID" value="NM_001030337.1"/>
</dbReference>
<dbReference type="SMR" id="O57328"/>
<dbReference type="FunCoup" id="O57328">
    <property type="interactions" value="536"/>
</dbReference>
<dbReference type="STRING" id="9031.ENSGALP00000014736"/>
<dbReference type="GlyCosmos" id="O57328">
    <property type="glycosylation" value="3 sites, No reported glycans"/>
</dbReference>
<dbReference type="GlyGen" id="O57328">
    <property type="glycosylation" value="4 sites"/>
</dbReference>
<dbReference type="PaxDb" id="9031-ENSGALP00000014736"/>
<dbReference type="GeneID" id="374062"/>
<dbReference type="KEGG" id="gga:374062"/>
<dbReference type="CTD" id="8321"/>
<dbReference type="VEuPathDB" id="HostDB:geneid_374062"/>
<dbReference type="eggNOG" id="KOG3577">
    <property type="taxonomic scope" value="Eukaryota"/>
</dbReference>
<dbReference type="InParanoid" id="O57328"/>
<dbReference type="OrthoDB" id="10053709at2759"/>
<dbReference type="PhylomeDB" id="O57328"/>
<dbReference type="PRO" id="PR:O57328"/>
<dbReference type="Proteomes" id="UP000000539">
    <property type="component" value="Unassembled WGS sequence"/>
</dbReference>
<dbReference type="GO" id="GO:0005886">
    <property type="term" value="C:plasma membrane"/>
    <property type="evidence" value="ECO:0000318"/>
    <property type="project" value="GO_Central"/>
</dbReference>
<dbReference type="GO" id="GO:0004930">
    <property type="term" value="F:G protein-coupled receptor activity"/>
    <property type="evidence" value="ECO:0007669"/>
    <property type="project" value="UniProtKB-KW"/>
</dbReference>
<dbReference type="GO" id="GO:0042813">
    <property type="term" value="F:Wnt receptor activity"/>
    <property type="evidence" value="ECO:0000318"/>
    <property type="project" value="GO_Central"/>
</dbReference>
<dbReference type="GO" id="GO:0017147">
    <property type="term" value="F:Wnt-protein binding"/>
    <property type="evidence" value="ECO:0000318"/>
    <property type="project" value="GO_Central"/>
</dbReference>
<dbReference type="GO" id="GO:0060070">
    <property type="term" value="P:canonical Wnt signaling pathway"/>
    <property type="evidence" value="ECO:0000318"/>
    <property type="project" value="GO_Central"/>
</dbReference>
<dbReference type="GO" id="GO:0035567">
    <property type="term" value="P:non-canonical Wnt signaling pathway"/>
    <property type="evidence" value="ECO:0000318"/>
    <property type="project" value="GO_Central"/>
</dbReference>
<dbReference type="CDD" id="cd15247">
    <property type="entry name" value="7tmF_FZD1"/>
    <property type="match status" value="1"/>
</dbReference>
<dbReference type="CDD" id="cd07465">
    <property type="entry name" value="CRD_FZ1"/>
    <property type="match status" value="1"/>
</dbReference>
<dbReference type="FunFam" id="1.10.2000.10:FF:000003">
    <property type="entry name" value="Frizzled class receptor 2"/>
    <property type="match status" value="1"/>
</dbReference>
<dbReference type="FunFam" id="1.20.1070.10:FF:000029">
    <property type="entry name" value="Frizzled class receptor 2"/>
    <property type="match status" value="1"/>
</dbReference>
<dbReference type="Gene3D" id="1.10.2000.10">
    <property type="entry name" value="Frizzled cysteine-rich domain"/>
    <property type="match status" value="1"/>
</dbReference>
<dbReference type="Gene3D" id="1.20.1070.10">
    <property type="entry name" value="Rhodopsin 7-helix transmembrane proteins"/>
    <property type="match status" value="1"/>
</dbReference>
<dbReference type="InterPro" id="IPR015526">
    <property type="entry name" value="Frizzled/SFRP"/>
</dbReference>
<dbReference type="InterPro" id="IPR000539">
    <property type="entry name" value="Frizzled/Smoothened_7TM"/>
</dbReference>
<dbReference type="InterPro" id="IPR020067">
    <property type="entry name" value="Frizzled_dom"/>
</dbReference>
<dbReference type="InterPro" id="IPR036790">
    <property type="entry name" value="Frizzled_dom_sf"/>
</dbReference>
<dbReference type="InterPro" id="IPR017981">
    <property type="entry name" value="GPCR_2-like_7TM"/>
</dbReference>
<dbReference type="PANTHER" id="PTHR11309">
    <property type="entry name" value="FRIZZLED"/>
    <property type="match status" value="1"/>
</dbReference>
<dbReference type="PANTHER" id="PTHR11309:SF81">
    <property type="entry name" value="FRIZZLED-1"/>
    <property type="match status" value="1"/>
</dbReference>
<dbReference type="Pfam" id="PF01534">
    <property type="entry name" value="Frizzled"/>
    <property type="match status" value="1"/>
</dbReference>
<dbReference type="Pfam" id="PF01392">
    <property type="entry name" value="Fz"/>
    <property type="match status" value="1"/>
</dbReference>
<dbReference type="PRINTS" id="PR00489">
    <property type="entry name" value="FRIZZLED"/>
</dbReference>
<dbReference type="SMART" id="SM00063">
    <property type="entry name" value="FRI"/>
    <property type="match status" value="1"/>
</dbReference>
<dbReference type="SMART" id="SM01330">
    <property type="entry name" value="Frizzled"/>
    <property type="match status" value="1"/>
</dbReference>
<dbReference type="SUPFAM" id="SSF63501">
    <property type="entry name" value="Frizzled cysteine-rich domain"/>
    <property type="match status" value="1"/>
</dbReference>
<dbReference type="PROSITE" id="PS50038">
    <property type="entry name" value="FZ"/>
    <property type="match status" value="1"/>
</dbReference>
<dbReference type="PROSITE" id="PS50261">
    <property type="entry name" value="G_PROTEIN_RECEP_F2_4"/>
    <property type="match status" value="1"/>
</dbReference>
<accession>O57328</accession>
<accession>Q9IA07</accession>
<evidence type="ECO:0000250" key="1"/>
<evidence type="ECO:0000250" key="2">
    <source>
        <dbReference type="UniProtKB" id="Q9UP38"/>
    </source>
</evidence>
<evidence type="ECO:0000255" key="3"/>
<evidence type="ECO:0000255" key="4">
    <source>
        <dbReference type="PROSITE-ProRule" id="PRU00090"/>
    </source>
</evidence>
<evidence type="ECO:0000256" key="5">
    <source>
        <dbReference type="SAM" id="MobiDB-lite"/>
    </source>
</evidence>
<evidence type="ECO:0000305" key="6"/>
<proteinExistence type="evidence at transcript level"/>
<feature type="signal peptide" evidence="3">
    <location>
        <begin position="1"/>
        <end position="48"/>
    </location>
</feature>
<feature type="chain" id="PRO_0000012976" description="Frizzled-1">
    <location>
        <begin position="49"/>
        <end position="592"/>
    </location>
</feature>
<feature type="topological domain" description="Extracellular" evidence="3">
    <location>
        <begin position="49"/>
        <end position="271"/>
    </location>
</feature>
<feature type="transmembrane region" description="Helical; Name=1" evidence="3">
    <location>
        <begin position="272"/>
        <end position="292"/>
    </location>
</feature>
<feature type="topological domain" description="Cytoplasmic" evidence="3">
    <location>
        <begin position="293"/>
        <end position="303"/>
    </location>
</feature>
<feature type="transmembrane region" description="Helical; Name=2" evidence="3">
    <location>
        <begin position="304"/>
        <end position="324"/>
    </location>
</feature>
<feature type="topological domain" description="Extracellular" evidence="3">
    <location>
        <begin position="325"/>
        <end position="351"/>
    </location>
</feature>
<feature type="transmembrane region" description="Helical; Name=3" evidence="3">
    <location>
        <begin position="352"/>
        <end position="372"/>
    </location>
</feature>
<feature type="topological domain" description="Cytoplasmic" evidence="3">
    <location>
        <begin position="373"/>
        <end position="394"/>
    </location>
</feature>
<feature type="transmembrane region" description="Helical; Name=4" evidence="3">
    <location>
        <begin position="395"/>
        <end position="415"/>
    </location>
</feature>
<feature type="topological domain" description="Extracellular" evidence="3">
    <location>
        <begin position="416"/>
        <end position="438"/>
    </location>
</feature>
<feature type="transmembrane region" description="Helical; Name=5" evidence="3">
    <location>
        <begin position="439"/>
        <end position="459"/>
    </location>
</feature>
<feature type="topological domain" description="Cytoplasmic" evidence="3">
    <location>
        <begin position="460"/>
        <end position="485"/>
    </location>
</feature>
<feature type="transmembrane region" description="Helical; Name=6" evidence="3">
    <location>
        <begin position="486"/>
        <end position="506"/>
    </location>
</feature>
<feature type="topological domain" description="Extracellular" evidence="3">
    <location>
        <begin position="507"/>
        <end position="546"/>
    </location>
</feature>
<feature type="transmembrane region" description="Helical; Name=7" evidence="3">
    <location>
        <begin position="547"/>
        <end position="567"/>
    </location>
</feature>
<feature type="topological domain" description="Cytoplasmic" evidence="3">
    <location>
        <begin position="568"/>
        <end position="592"/>
    </location>
</feature>
<feature type="domain" description="FZ" evidence="4">
    <location>
        <begin position="65"/>
        <end position="184"/>
    </location>
</feature>
<feature type="region of interest" description="Disordered" evidence="5">
    <location>
        <begin position="1"/>
        <end position="26"/>
    </location>
</feature>
<feature type="region of interest" description="Disordered" evidence="5">
    <location>
        <begin position="185"/>
        <end position="219"/>
    </location>
</feature>
<feature type="short sequence motif" description="Lys-Thr-X-X-X-Trp motif, mediates interaction with the PDZ domain of Dvl family members" evidence="1">
    <location>
        <begin position="570"/>
        <end position="575"/>
    </location>
</feature>
<feature type="short sequence motif" description="PDZ-binding">
    <location>
        <begin position="590"/>
        <end position="592"/>
    </location>
</feature>
<feature type="compositionally biased region" description="Gly residues" evidence="5">
    <location>
        <begin position="7"/>
        <end position="20"/>
    </location>
</feature>
<feature type="compositionally biased region" description="Gly residues" evidence="5">
    <location>
        <begin position="207"/>
        <end position="218"/>
    </location>
</feature>
<feature type="glycosylation site" description="N-linked (GlcNAc...) asparagine" evidence="3">
    <location>
        <position position="84"/>
    </location>
</feature>
<feature type="glycosylation site" description="N-linked (GlcNAc...) asparagine" evidence="3">
    <location>
        <position position="185"/>
    </location>
</feature>
<feature type="glycosylation site" description="N-linked (GlcNAc...) asparagine" evidence="3">
    <location>
        <position position="533"/>
    </location>
</feature>
<feature type="disulfide bond" evidence="4">
    <location>
        <begin position="70"/>
        <end position="131"/>
    </location>
</feature>
<feature type="disulfide bond" evidence="4">
    <location>
        <begin position="78"/>
        <end position="124"/>
    </location>
</feature>
<feature type="disulfide bond" evidence="4">
    <location>
        <begin position="115"/>
        <end position="152"/>
    </location>
</feature>
<feature type="disulfide bond" evidence="4">
    <location>
        <begin position="141"/>
        <end position="181"/>
    </location>
</feature>
<feature type="disulfide bond" evidence="4">
    <location>
        <begin position="145"/>
        <end position="169"/>
    </location>
</feature>
<sequence>MAERRGPAGGGSGEVGGGRRAGGDRCPRRPPALPLLLLLWAAALPAGGQPAAQPAALSERGISIPDHGYCQPISIPLCTDIAYNQTIMPNLLGHTNQEDAGLEVHQFYPLVKVQCSAELKFFLCSMYAPVCTVLEQALPPCRSLCERARQGCEALMNKFGFQWPDTLRCEKFPVHGAGELCVGQNASERGTPTPALRPESWTSNPHRGGGAGGSGPGEARGRFSCPRALKVPSYLNYRFLGEKDCGAPCEPGRLYGLMYFGPEELRFSRTWIGIWSVLCCASTLFTVLTYLVDMKRFSYPERPIIFLSGCYTAVAVAYIAGFLLEERVVCNERFAEDGSRTVAQGTKREGCTILFMMLYFFGMASSIWWVILSLTWFLAAGMKWGHEAIEANSQYFHLAAWAVPAIKTITILALGQVDGDVLSGVCFVGINNVDALRGFVLAPLFVYLFIGTSFLLAGFVSLFRIRTIMKHDGTKTEKLEKLMVRIGIFSVLYTVPATIVIACYFYEQAFREQWERSWVTQSCKSYAIPCPNNHSSHHPPMSPDFTVFMIKYLMTLIVGITSGFWIWSGKTLNSWRKFYTRLTNSKQGETTV</sequence>
<gene>
    <name type="primary">FZD1</name>
    <name type="synonym">FZ1</name>
</gene>
<protein>
    <recommendedName>
        <fullName>Frizzled-1</fullName>
        <shortName>Fz-1</shortName>
        <shortName>cFz-1</shortName>
    </recommendedName>
</protein>
<name>FZD1_CHICK</name>
<comment type="function">
    <text evidence="2 6">Receptor for Wnt proteins. Functions in the canonical Wnt/beta-catenin signaling pathway. The canonical Wnt/beta-catenin signaling pathway leads to the activation of disheveled proteins, inhibition of GSK-3 kinase, nuclear accumulation of beta-catenin and activation of Wnt target genes (By similarity). A second signaling pathway involving PKC and calcium fluxes has been seen for some family members, but it is not yet clear if it represents a distinct pathway or if it can be integrated in the canonical pathway, as PKC seems to be required for Wnt-mediated inactivation of GSK-3 kinase. Both pathways seem to involve interactions with G-proteins. May be involved in transduction and intercellular transmission of polarity information during tissue morphogenesis and/or in differentiated tissues (Probable).</text>
</comment>
<comment type="subcellular location">
    <subcellularLocation>
        <location evidence="2">Cell membrane</location>
        <topology evidence="3">Multi-pass membrane protein</topology>
    </subcellularLocation>
</comment>
<comment type="tissue specificity">
    <text>Expressed in the lens, otic placode (medial wall of the vesicle) and in epibranchial placode. Also expressed in the developing somites (dermomyotome).</text>
</comment>
<comment type="developmental stage">
    <text>Somites and placodal expression appears at stage 9. At this stage, more obvious expression is detected in the neural tube (midbrain and rostral hindbrain), and persists through about stage 15. Strongly expressed in the ectoderm and around the otic placodes at stage 12. At stage 16, otic expression declines, expression in epibranchial placodes begins and peaks at stage 20. Expression in the lens of the eye is first seen at about stage 15, more evident at stage 16. At stage 17, seen in the ectoderm and mesenchyme of the limb primordia. Detected at stage 20 in the lip of the optic cup, in the mesenchyme surrounding the eye, in the ectoderm overlying the lens and in the ectoderm caudal and ventral of the olfactory placodes. From stages 20-30, expressed in cartilage and in the dermomyotomes and migrating sclerotomal cells forming vertebrae.</text>
</comment>
<comment type="domain">
    <text evidence="1">Lys-Thr-X-X-X-Trp motif interacts with the PDZ domain of Dvl (Disheveled) family members and is involved in the activation of the Wnt/beta-catenin signaling pathway.</text>
</comment>
<comment type="domain">
    <text evidence="1">The FZ domain is involved in binding with Wnt ligands.</text>
</comment>
<comment type="similarity">
    <text evidence="6">Belongs to the G-protein coupled receptor Fz/Smo family.</text>
</comment>
<reference key="1">
    <citation type="journal article" date="1997" name="Cold Spring Harb. Symp. Quant. Biol.">
        <title>Expression of Wnt and Frizzled genes during chick limb bud development.</title>
        <authorList>
            <person name="Kengaku M."/>
            <person name="Twombly V."/>
            <person name="Tabin C."/>
        </authorList>
    </citation>
    <scope>NUCLEOTIDE SEQUENCE [MRNA]</scope>
    <source>
        <tissue>Limb bud</tissue>
    </source>
</reference>
<reference key="2">
    <citation type="journal article" date="2000" name="Mech. Dev.">
        <title>Characterization of avian frizzled genes in cranial placode development.</title>
        <authorList>
            <person name="Stark M.R."/>
            <person name="Biggs J.J."/>
            <person name="Schoenwolf G.C."/>
            <person name="Rao M.S."/>
        </authorList>
    </citation>
    <scope>NUCLEOTIDE SEQUENCE [MRNA] OF 307-592</scope>
</reference>